<accession>A6LKX5</accession>
<gene>
    <name evidence="1" type="primary">cbiM</name>
    <name type="ordered locus">Tmel_0712</name>
</gene>
<keyword id="KW-0997">Cell inner membrane</keyword>
<keyword id="KW-1003">Cell membrane</keyword>
<keyword id="KW-0169">Cobalamin biosynthesis</keyword>
<keyword id="KW-0170">Cobalt</keyword>
<keyword id="KW-0171">Cobalt transport</keyword>
<keyword id="KW-0406">Ion transport</keyword>
<keyword id="KW-0472">Membrane</keyword>
<keyword id="KW-0732">Signal</keyword>
<keyword id="KW-0812">Transmembrane</keyword>
<keyword id="KW-1133">Transmembrane helix</keyword>
<keyword id="KW-0813">Transport</keyword>
<feature type="signal peptide" evidence="1">
    <location>
        <begin position="1"/>
        <end position="33"/>
    </location>
</feature>
<feature type="chain" id="PRO_5000253098" description="Cobalt transport protein CbiM">
    <location>
        <begin position="34"/>
        <end position="235"/>
    </location>
</feature>
<feature type="transmembrane region" description="Helical" evidence="1">
    <location>
        <begin position="34"/>
        <end position="51"/>
    </location>
</feature>
<feature type="transmembrane region" description="Helical" evidence="1">
    <location>
        <begin position="63"/>
        <end position="83"/>
    </location>
</feature>
<feature type="transmembrane region" description="Helical" evidence="1">
    <location>
        <begin position="95"/>
        <end position="115"/>
    </location>
</feature>
<feature type="transmembrane region" description="Helical" evidence="1">
    <location>
        <begin position="118"/>
        <end position="138"/>
    </location>
</feature>
<feature type="transmembrane region" description="Helical" evidence="1">
    <location>
        <begin position="156"/>
        <end position="176"/>
    </location>
</feature>
<feature type="transmembrane region" description="Helical" evidence="1">
    <location>
        <begin position="199"/>
        <end position="219"/>
    </location>
</feature>
<dbReference type="EMBL" id="CP000716">
    <property type="protein sequence ID" value="ABR30576.1"/>
    <property type="molecule type" value="Genomic_DNA"/>
</dbReference>
<dbReference type="RefSeq" id="WP_012056937.1">
    <property type="nucleotide sequence ID" value="NC_009616.1"/>
</dbReference>
<dbReference type="SMR" id="A6LKX5"/>
<dbReference type="STRING" id="391009.Tmel_0712"/>
<dbReference type="KEGG" id="tme:Tmel_0712"/>
<dbReference type="eggNOG" id="COG0310">
    <property type="taxonomic scope" value="Bacteria"/>
</dbReference>
<dbReference type="HOGENOM" id="CLU_052508_3_0_0"/>
<dbReference type="OrthoDB" id="9809846at2"/>
<dbReference type="UniPathway" id="UPA00148"/>
<dbReference type="Proteomes" id="UP000001110">
    <property type="component" value="Chromosome"/>
</dbReference>
<dbReference type="GO" id="GO:0043190">
    <property type="term" value="C:ATP-binding cassette (ABC) transporter complex"/>
    <property type="evidence" value="ECO:0007669"/>
    <property type="project" value="InterPro"/>
</dbReference>
<dbReference type="GO" id="GO:0015087">
    <property type="term" value="F:cobalt ion transmembrane transporter activity"/>
    <property type="evidence" value="ECO:0007669"/>
    <property type="project" value="UniProtKB-UniRule"/>
</dbReference>
<dbReference type="GO" id="GO:0009236">
    <property type="term" value="P:cobalamin biosynthetic process"/>
    <property type="evidence" value="ECO:0007669"/>
    <property type="project" value="UniProtKB-UniRule"/>
</dbReference>
<dbReference type="FunFam" id="1.10.1760.20:FF:000001">
    <property type="entry name" value="Cobalt transport protein CbiM"/>
    <property type="match status" value="1"/>
</dbReference>
<dbReference type="Gene3D" id="1.10.1760.20">
    <property type="match status" value="1"/>
</dbReference>
<dbReference type="HAMAP" id="MF_01462">
    <property type="entry name" value="CbiM"/>
    <property type="match status" value="1"/>
</dbReference>
<dbReference type="InterPro" id="IPR018024">
    <property type="entry name" value="CbiM"/>
</dbReference>
<dbReference type="InterPro" id="IPR002751">
    <property type="entry name" value="CbiM/NikMN"/>
</dbReference>
<dbReference type="NCBIfam" id="TIGR00123">
    <property type="entry name" value="cbiM"/>
    <property type="match status" value="1"/>
</dbReference>
<dbReference type="NCBIfam" id="NF006184">
    <property type="entry name" value="PRK08319.1"/>
    <property type="match status" value="1"/>
</dbReference>
<dbReference type="PANTHER" id="PTHR43627">
    <property type="match status" value="1"/>
</dbReference>
<dbReference type="PANTHER" id="PTHR43627:SF1">
    <property type="entry name" value="COBALT TRANSPORT PROTEIN CBIM"/>
    <property type="match status" value="1"/>
</dbReference>
<dbReference type="Pfam" id="PF01891">
    <property type="entry name" value="CbiM"/>
    <property type="match status" value="1"/>
</dbReference>
<proteinExistence type="inferred from homology"/>
<reference key="1">
    <citation type="submission" date="2007-05" db="EMBL/GenBank/DDBJ databases">
        <title>Complete sequence of Thermosipho melanesiensis BI429.</title>
        <authorList>
            <consortium name="US DOE Joint Genome Institute"/>
            <person name="Copeland A."/>
            <person name="Lucas S."/>
            <person name="Lapidus A."/>
            <person name="Barry K."/>
            <person name="Glavina del Rio T."/>
            <person name="Dalin E."/>
            <person name="Tice H."/>
            <person name="Pitluck S."/>
            <person name="Chertkov O."/>
            <person name="Brettin T."/>
            <person name="Bruce D."/>
            <person name="Detter J.C."/>
            <person name="Han C."/>
            <person name="Schmutz J."/>
            <person name="Larimer F."/>
            <person name="Land M."/>
            <person name="Hauser L."/>
            <person name="Kyrpides N."/>
            <person name="Mikhailova N."/>
            <person name="Nelson K."/>
            <person name="Gogarten J.P."/>
            <person name="Noll K."/>
            <person name="Richardson P."/>
        </authorList>
    </citation>
    <scope>NUCLEOTIDE SEQUENCE [LARGE SCALE GENOMIC DNA]</scope>
    <source>
        <strain>DSM 12029 / CIP 104789 / BI429</strain>
    </source>
</reference>
<sequence length="235" mass="25994">MRYLKFFLLLVFLVPSFGFSMHIMEGFLPPTHALIWYILSLPFFVIGLFTIRKTIKEKPNLKMLLAFVGAFTFVLSAMKIPSVTGSCSHPTGIGLGAIIFGPFTMTVIGTIVLLFQALLLAHGGLTTLGANTFSMAIVGSLVSYFIYKSLYKKNRNIAVFLAAFLGDLFTYVTTSFQLAVAFPDKTHGFIFSLAKFLSIFAITQVPLAIIEGLVTVVVIDLIYKYNKNELFEEGL</sequence>
<protein>
    <recommendedName>
        <fullName evidence="1">Cobalt transport protein CbiM</fullName>
    </recommendedName>
    <alternativeName>
        <fullName evidence="1">Energy-coupling factor transporter probable substrate-capture protein CbiM</fullName>
        <shortName evidence="1">ECF transporter S component CbiM</shortName>
    </alternativeName>
</protein>
<organism>
    <name type="scientific">Thermosipho melanesiensis (strain DSM 12029 / CIP 104789 / BI429)</name>
    <dbReference type="NCBI Taxonomy" id="391009"/>
    <lineage>
        <taxon>Bacteria</taxon>
        <taxon>Thermotogati</taxon>
        <taxon>Thermotogota</taxon>
        <taxon>Thermotogae</taxon>
        <taxon>Thermotogales</taxon>
        <taxon>Fervidobacteriaceae</taxon>
        <taxon>Thermosipho</taxon>
    </lineage>
</organism>
<name>CBIM_THEM4</name>
<evidence type="ECO:0000255" key="1">
    <source>
        <dbReference type="HAMAP-Rule" id="MF_01462"/>
    </source>
</evidence>
<comment type="function">
    <text evidence="1">Part of the energy-coupling factor (ECF) transporter complex CbiMNOQ involved in cobalt import.</text>
</comment>
<comment type="pathway">
    <text evidence="1">Cofactor biosynthesis; adenosylcobalamin biosynthesis.</text>
</comment>
<comment type="subunit">
    <text evidence="1">Forms an energy-coupling factor (ECF) transporter complex composed of an ATP-binding protein (A component, CbiO), a transmembrane protein (T component, CbiQ) and 2 possible substrate-capture proteins (S components, CbiM and CbiN) of unknown stoichimetry.</text>
</comment>
<comment type="subcellular location">
    <subcellularLocation>
        <location evidence="1">Cell inner membrane</location>
        <topology evidence="1">Multi-pass membrane protein</topology>
    </subcellularLocation>
</comment>
<comment type="similarity">
    <text evidence="1">Belongs to the CbiM family.</text>
</comment>